<sequence>MNIHEYQAKHILSRFGVSVPKGAIVHSLSEVDDAISKLHSKVIVVKAQIHAGGRGKAGGVVVCRTSDEAKASIKNMLGSTLVTHQTSKDGQKVRKVYLEEGCDIKKEYYISAIVNRKQSQVSIIFSTEGGVDIEEVASTSPEKVIVCNIDPLFGFQSFHGRNLCFDSNLSLDQTRKISDIAEKIYKVMLSTDANQVEINPLVETSSGNFIALDAKINFDDNALYRHPDIQELRDYDEEIKEEIEASKYGLNYIKMDGNIGCMVNGAGLAMATMDIIKYYGAEPANFLDVGGGASQKTVTEAFKIILSDKVDGILVNIFGGIMRCDIIANGIIAAIEEIRINVPLVVRLSGTNFELGKKLLDDSSLNIITANDLSEAAYNIVNIVKK</sequence>
<keyword id="KW-0067">ATP-binding</keyword>
<keyword id="KW-0436">Ligase</keyword>
<keyword id="KW-0460">Magnesium</keyword>
<keyword id="KW-0479">Metal-binding</keyword>
<keyword id="KW-0547">Nucleotide-binding</keyword>
<keyword id="KW-0816">Tricarboxylic acid cycle</keyword>
<proteinExistence type="inferred from homology"/>
<accession>Q3YSV6</accession>
<dbReference type="EC" id="6.2.1.5" evidence="1"/>
<dbReference type="EMBL" id="CP000107">
    <property type="protein sequence ID" value="AAZ68199.1"/>
    <property type="molecule type" value="Genomic_DNA"/>
</dbReference>
<dbReference type="RefSeq" id="WP_011304277.1">
    <property type="nucleotide sequence ID" value="NC_007354.1"/>
</dbReference>
<dbReference type="SMR" id="Q3YSV6"/>
<dbReference type="FunCoup" id="Q3YSV6">
    <property type="interactions" value="314"/>
</dbReference>
<dbReference type="STRING" id="269484.Ecaj_0148"/>
<dbReference type="KEGG" id="ecn:Ecaj_0148"/>
<dbReference type="eggNOG" id="COG0045">
    <property type="taxonomic scope" value="Bacteria"/>
</dbReference>
<dbReference type="HOGENOM" id="CLU_037430_0_2_5"/>
<dbReference type="InParanoid" id="Q3YSV6"/>
<dbReference type="UniPathway" id="UPA00223">
    <property type="reaction ID" value="UER00999"/>
</dbReference>
<dbReference type="Proteomes" id="UP000000435">
    <property type="component" value="Chromosome"/>
</dbReference>
<dbReference type="GO" id="GO:0005829">
    <property type="term" value="C:cytosol"/>
    <property type="evidence" value="ECO:0007669"/>
    <property type="project" value="TreeGrafter"/>
</dbReference>
<dbReference type="GO" id="GO:0042709">
    <property type="term" value="C:succinate-CoA ligase complex"/>
    <property type="evidence" value="ECO:0007669"/>
    <property type="project" value="TreeGrafter"/>
</dbReference>
<dbReference type="GO" id="GO:0005524">
    <property type="term" value="F:ATP binding"/>
    <property type="evidence" value="ECO:0007669"/>
    <property type="project" value="UniProtKB-UniRule"/>
</dbReference>
<dbReference type="GO" id="GO:0000287">
    <property type="term" value="F:magnesium ion binding"/>
    <property type="evidence" value="ECO:0007669"/>
    <property type="project" value="UniProtKB-UniRule"/>
</dbReference>
<dbReference type="GO" id="GO:0004775">
    <property type="term" value="F:succinate-CoA ligase (ADP-forming) activity"/>
    <property type="evidence" value="ECO:0007669"/>
    <property type="project" value="UniProtKB-UniRule"/>
</dbReference>
<dbReference type="GO" id="GO:0004776">
    <property type="term" value="F:succinate-CoA ligase (GDP-forming) activity"/>
    <property type="evidence" value="ECO:0007669"/>
    <property type="project" value="RHEA"/>
</dbReference>
<dbReference type="GO" id="GO:0006104">
    <property type="term" value="P:succinyl-CoA metabolic process"/>
    <property type="evidence" value="ECO:0007669"/>
    <property type="project" value="TreeGrafter"/>
</dbReference>
<dbReference type="GO" id="GO:0006099">
    <property type="term" value="P:tricarboxylic acid cycle"/>
    <property type="evidence" value="ECO:0007669"/>
    <property type="project" value="UniProtKB-UniRule"/>
</dbReference>
<dbReference type="FunFam" id="3.30.1490.20:FF:000002">
    <property type="entry name" value="Succinate--CoA ligase [ADP-forming] subunit beta"/>
    <property type="match status" value="1"/>
</dbReference>
<dbReference type="FunFam" id="3.30.470.20:FF:000002">
    <property type="entry name" value="Succinate--CoA ligase [ADP-forming] subunit beta"/>
    <property type="match status" value="1"/>
</dbReference>
<dbReference type="FunFam" id="3.40.50.261:FF:000001">
    <property type="entry name" value="Succinate--CoA ligase [ADP-forming] subunit beta"/>
    <property type="match status" value="1"/>
</dbReference>
<dbReference type="Gene3D" id="3.30.1490.20">
    <property type="entry name" value="ATP-grasp fold, A domain"/>
    <property type="match status" value="1"/>
</dbReference>
<dbReference type="Gene3D" id="3.30.470.20">
    <property type="entry name" value="ATP-grasp fold, B domain"/>
    <property type="match status" value="1"/>
</dbReference>
<dbReference type="Gene3D" id="3.40.50.261">
    <property type="entry name" value="Succinyl-CoA synthetase domains"/>
    <property type="match status" value="1"/>
</dbReference>
<dbReference type="HAMAP" id="MF_00558">
    <property type="entry name" value="Succ_CoA_beta"/>
    <property type="match status" value="1"/>
</dbReference>
<dbReference type="InterPro" id="IPR011761">
    <property type="entry name" value="ATP-grasp"/>
</dbReference>
<dbReference type="InterPro" id="IPR013650">
    <property type="entry name" value="ATP-grasp_succ-CoA_synth-type"/>
</dbReference>
<dbReference type="InterPro" id="IPR013815">
    <property type="entry name" value="ATP_grasp_subdomain_1"/>
</dbReference>
<dbReference type="InterPro" id="IPR017866">
    <property type="entry name" value="Succ-CoA_synthase_bsu_CS"/>
</dbReference>
<dbReference type="InterPro" id="IPR005811">
    <property type="entry name" value="SUCC_ACL_C"/>
</dbReference>
<dbReference type="InterPro" id="IPR005809">
    <property type="entry name" value="Succ_CoA_ligase-like_bsu"/>
</dbReference>
<dbReference type="InterPro" id="IPR016102">
    <property type="entry name" value="Succinyl-CoA_synth-like"/>
</dbReference>
<dbReference type="NCBIfam" id="NF001913">
    <property type="entry name" value="PRK00696.1"/>
    <property type="match status" value="1"/>
</dbReference>
<dbReference type="NCBIfam" id="TIGR01016">
    <property type="entry name" value="sucCoAbeta"/>
    <property type="match status" value="1"/>
</dbReference>
<dbReference type="PANTHER" id="PTHR11815:SF10">
    <property type="entry name" value="SUCCINATE--COA LIGASE [GDP-FORMING] SUBUNIT BETA, MITOCHONDRIAL"/>
    <property type="match status" value="1"/>
</dbReference>
<dbReference type="PANTHER" id="PTHR11815">
    <property type="entry name" value="SUCCINYL-COA SYNTHETASE BETA CHAIN"/>
    <property type="match status" value="1"/>
</dbReference>
<dbReference type="Pfam" id="PF08442">
    <property type="entry name" value="ATP-grasp_2"/>
    <property type="match status" value="1"/>
</dbReference>
<dbReference type="Pfam" id="PF00549">
    <property type="entry name" value="Ligase_CoA"/>
    <property type="match status" value="1"/>
</dbReference>
<dbReference type="PIRSF" id="PIRSF001554">
    <property type="entry name" value="SucCS_beta"/>
    <property type="match status" value="1"/>
</dbReference>
<dbReference type="SUPFAM" id="SSF56059">
    <property type="entry name" value="Glutathione synthetase ATP-binding domain-like"/>
    <property type="match status" value="1"/>
</dbReference>
<dbReference type="SUPFAM" id="SSF52210">
    <property type="entry name" value="Succinyl-CoA synthetase domains"/>
    <property type="match status" value="1"/>
</dbReference>
<dbReference type="PROSITE" id="PS50975">
    <property type="entry name" value="ATP_GRASP"/>
    <property type="match status" value="1"/>
</dbReference>
<dbReference type="PROSITE" id="PS01217">
    <property type="entry name" value="SUCCINYL_COA_LIG_3"/>
    <property type="match status" value="1"/>
</dbReference>
<protein>
    <recommendedName>
        <fullName evidence="1">Succinate--CoA ligase [ADP-forming] subunit beta</fullName>
        <ecNumber evidence="1">6.2.1.5</ecNumber>
    </recommendedName>
    <alternativeName>
        <fullName evidence="1">Succinyl-CoA synthetase subunit beta</fullName>
        <shortName evidence="1">SCS-beta</shortName>
    </alternativeName>
</protein>
<feature type="chain" id="PRO_1000082076" description="Succinate--CoA ligase [ADP-forming] subunit beta">
    <location>
        <begin position="1"/>
        <end position="386"/>
    </location>
</feature>
<feature type="domain" description="ATP-grasp" evidence="1">
    <location>
        <begin position="9"/>
        <end position="244"/>
    </location>
</feature>
<feature type="binding site" evidence="1">
    <location>
        <position position="46"/>
    </location>
    <ligand>
        <name>ATP</name>
        <dbReference type="ChEBI" id="CHEBI:30616"/>
    </ligand>
</feature>
<feature type="binding site" evidence="1">
    <location>
        <begin position="53"/>
        <end position="55"/>
    </location>
    <ligand>
        <name>ATP</name>
        <dbReference type="ChEBI" id="CHEBI:30616"/>
    </ligand>
</feature>
<feature type="binding site" evidence="1">
    <location>
        <position position="99"/>
    </location>
    <ligand>
        <name>ATP</name>
        <dbReference type="ChEBI" id="CHEBI:30616"/>
    </ligand>
</feature>
<feature type="binding site" evidence="1">
    <location>
        <position position="102"/>
    </location>
    <ligand>
        <name>ATP</name>
        <dbReference type="ChEBI" id="CHEBI:30616"/>
    </ligand>
</feature>
<feature type="binding site" evidence="1">
    <location>
        <position position="107"/>
    </location>
    <ligand>
        <name>ATP</name>
        <dbReference type="ChEBI" id="CHEBI:30616"/>
    </ligand>
</feature>
<feature type="binding site" evidence="1">
    <location>
        <position position="199"/>
    </location>
    <ligand>
        <name>Mg(2+)</name>
        <dbReference type="ChEBI" id="CHEBI:18420"/>
    </ligand>
</feature>
<feature type="binding site" evidence="1">
    <location>
        <position position="213"/>
    </location>
    <ligand>
        <name>Mg(2+)</name>
        <dbReference type="ChEBI" id="CHEBI:18420"/>
    </ligand>
</feature>
<feature type="binding site" evidence="1">
    <location>
        <position position="264"/>
    </location>
    <ligand>
        <name>substrate</name>
        <note>ligand shared with subunit alpha</note>
    </ligand>
</feature>
<feature type="binding site" evidence="1">
    <location>
        <begin position="320"/>
        <end position="322"/>
    </location>
    <ligand>
        <name>substrate</name>
        <note>ligand shared with subunit alpha</note>
    </ligand>
</feature>
<gene>
    <name evidence="1" type="primary">sucC</name>
    <name type="ordered locus">Ecaj_0148</name>
</gene>
<name>SUCC_EHRCJ</name>
<evidence type="ECO:0000255" key="1">
    <source>
        <dbReference type="HAMAP-Rule" id="MF_00558"/>
    </source>
</evidence>
<reference key="1">
    <citation type="journal article" date="2006" name="J. Bacteriol.">
        <title>The genome of the obligately intracellular bacterium Ehrlichia canis reveals themes of complex membrane structure and immune evasion strategies.</title>
        <authorList>
            <person name="Mavromatis K."/>
            <person name="Doyle C.K."/>
            <person name="Lykidis A."/>
            <person name="Ivanova N."/>
            <person name="Francino M.P."/>
            <person name="Chain P."/>
            <person name="Shin M."/>
            <person name="Malfatti S."/>
            <person name="Larimer F."/>
            <person name="Copeland A."/>
            <person name="Detter J.C."/>
            <person name="Land M."/>
            <person name="Richardson P.M."/>
            <person name="Yu X.J."/>
            <person name="Walker D.H."/>
            <person name="McBride J.W."/>
            <person name="Kyrpides N.C."/>
        </authorList>
    </citation>
    <scope>NUCLEOTIDE SEQUENCE [LARGE SCALE GENOMIC DNA]</scope>
    <source>
        <strain>Jake</strain>
    </source>
</reference>
<comment type="function">
    <text evidence="1">Succinyl-CoA synthetase functions in the citric acid cycle (TCA), coupling the hydrolysis of succinyl-CoA to the synthesis of either ATP or GTP and thus represents the only step of substrate-level phosphorylation in the TCA. The beta subunit provides nucleotide specificity of the enzyme and binds the substrate succinate, while the binding sites for coenzyme A and phosphate are found in the alpha subunit.</text>
</comment>
<comment type="catalytic activity">
    <reaction evidence="1">
        <text>succinate + ATP + CoA = succinyl-CoA + ADP + phosphate</text>
        <dbReference type="Rhea" id="RHEA:17661"/>
        <dbReference type="ChEBI" id="CHEBI:30031"/>
        <dbReference type="ChEBI" id="CHEBI:30616"/>
        <dbReference type="ChEBI" id="CHEBI:43474"/>
        <dbReference type="ChEBI" id="CHEBI:57287"/>
        <dbReference type="ChEBI" id="CHEBI:57292"/>
        <dbReference type="ChEBI" id="CHEBI:456216"/>
        <dbReference type="EC" id="6.2.1.5"/>
    </reaction>
    <physiologicalReaction direction="right-to-left" evidence="1">
        <dbReference type="Rhea" id="RHEA:17663"/>
    </physiologicalReaction>
</comment>
<comment type="catalytic activity">
    <reaction evidence="1">
        <text>GTP + succinate + CoA = succinyl-CoA + GDP + phosphate</text>
        <dbReference type="Rhea" id="RHEA:22120"/>
        <dbReference type="ChEBI" id="CHEBI:30031"/>
        <dbReference type="ChEBI" id="CHEBI:37565"/>
        <dbReference type="ChEBI" id="CHEBI:43474"/>
        <dbReference type="ChEBI" id="CHEBI:57287"/>
        <dbReference type="ChEBI" id="CHEBI:57292"/>
        <dbReference type="ChEBI" id="CHEBI:58189"/>
    </reaction>
    <physiologicalReaction direction="right-to-left" evidence="1">
        <dbReference type="Rhea" id="RHEA:22122"/>
    </physiologicalReaction>
</comment>
<comment type="cofactor">
    <cofactor evidence="1">
        <name>Mg(2+)</name>
        <dbReference type="ChEBI" id="CHEBI:18420"/>
    </cofactor>
    <text evidence="1">Binds 1 Mg(2+) ion per subunit.</text>
</comment>
<comment type="pathway">
    <text evidence="1">Carbohydrate metabolism; tricarboxylic acid cycle; succinate from succinyl-CoA (ligase route): step 1/1.</text>
</comment>
<comment type="subunit">
    <text evidence="1">Heterotetramer of two alpha and two beta subunits.</text>
</comment>
<comment type="similarity">
    <text evidence="1">Belongs to the succinate/malate CoA ligase beta subunit family.</text>
</comment>
<organism>
    <name type="scientific">Ehrlichia canis (strain Jake)</name>
    <dbReference type="NCBI Taxonomy" id="269484"/>
    <lineage>
        <taxon>Bacteria</taxon>
        <taxon>Pseudomonadati</taxon>
        <taxon>Pseudomonadota</taxon>
        <taxon>Alphaproteobacteria</taxon>
        <taxon>Rickettsiales</taxon>
        <taxon>Anaplasmataceae</taxon>
        <taxon>Ehrlichia</taxon>
    </lineage>
</organism>